<proteinExistence type="inferred from homology"/>
<comment type="similarity">
    <text evidence="1">Belongs to the universal ribosomal protein uS2 family.</text>
</comment>
<protein>
    <recommendedName>
        <fullName evidence="1">Small ribosomal subunit protein uS2</fullName>
    </recommendedName>
    <alternativeName>
        <fullName evidence="3">30S ribosomal protein S2</fullName>
    </alternativeName>
</protein>
<name>RS2_CAMJE</name>
<keyword id="KW-1185">Reference proteome</keyword>
<keyword id="KW-0687">Ribonucleoprotein</keyword>
<keyword id="KW-0689">Ribosomal protein</keyword>
<accession>Q9PNB3</accession>
<accession>Q0P974</accession>
<gene>
    <name evidence="1" type="primary">rpsB</name>
    <name type="ordered locus">Cj1182c</name>
</gene>
<dbReference type="EMBL" id="AL111168">
    <property type="protein sequence ID" value="CAL35297.1"/>
    <property type="molecule type" value="Genomic_DNA"/>
</dbReference>
<dbReference type="PIR" id="H81323">
    <property type="entry name" value="H81323"/>
</dbReference>
<dbReference type="RefSeq" id="WP_002892710.1">
    <property type="nucleotide sequence ID" value="NZ_SZUC01000001.1"/>
</dbReference>
<dbReference type="RefSeq" id="YP_002344573.1">
    <property type="nucleotide sequence ID" value="NC_002163.1"/>
</dbReference>
<dbReference type="SMR" id="Q9PNB3"/>
<dbReference type="IntAct" id="Q9PNB3">
    <property type="interactions" value="12"/>
</dbReference>
<dbReference type="STRING" id="192222.Cj1182c"/>
<dbReference type="PaxDb" id="192222-Cj1182c"/>
<dbReference type="EnsemblBacteria" id="CAL35297">
    <property type="protein sequence ID" value="CAL35297"/>
    <property type="gene ID" value="Cj1182c"/>
</dbReference>
<dbReference type="GeneID" id="905472"/>
<dbReference type="KEGG" id="cje:Cj1182c"/>
<dbReference type="PATRIC" id="fig|192222.6.peg.1163"/>
<dbReference type="eggNOG" id="COG0052">
    <property type="taxonomic scope" value="Bacteria"/>
</dbReference>
<dbReference type="HOGENOM" id="CLU_040318_1_2_7"/>
<dbReference type="OrthoDB" id="9808036at2"/>
<dbReference type="Proteomes" id="UP000000799">
    <property type="component" value="Chromosome"/>
</dbReference>
<dbReference type="GO" id="GO:0022627">
    <property type="term" value="C:cytosolic small ribosomal subunit"/>
    <property type="evidence" value="ECO:0007669"/>
    <property type="project" value="TreeGrafter"/>
</dbReference>
<dbReference type="GO" id="GO:0003735">
    <property type="term" value="F:structural constituent of ribosome"/>
    <property type="evidence" value="ECO:0007669"/>
    <property type="project" value="InterPro"/>
</dbReference>
<dbReference type="GO" id="GO:0006412">
    <property type="term" value="P:translation"/>
    <property type="evidence" value="ECO:0007669"/>
    <property type="project" value="UniProtKB-UniRule"/>
</dbReference>
<dbReference type="CDD" id="cd01425">
    <property type="entry name" value="RPS2"/>
    <property type="match status" value="1"/>
</dbReference>
<dbReference type="FunFam" id="1.10.287.610:FF:000001">
    <property type="entry name" value="30S ribosomal protein S2"/>
    <property type="match status" value="1"/>
</dbReference>
<dbReference type="Gene3D" id="3.40.50.10490">
    <property type="entry name" value="Glucose-6-phosphate isomerase like protein, domain 1"/>
    <property type="match status" value="1"/>
</dbReference>
<dbReference type="Gene3D" id="1.10.287.610">
    <property type="entry name" value="Helix hairpin bin"/>
    <property type="match status" value="1"/>
</dbReference>
<dbReference type="HAMAP" id="MF_00291_B">
    <property type="entry name" value="Ribosomal_uS2_B"/>
    <property type="match status" value="1"/>
</dbReference>
<dbReference type="InterPro" id="IPR001865">
    <property type="entry name" value="Ribosomal_uS2"/>
</dbReference>
<dbReference type="InterPro" id="IPR005706">
    <property type="entry name" value="Ribosomal_uS2_bac/mit/plastid"/>
</dbReference>
<dbReference type="InterPro" id="IPR018130">
    <property type="entry name" value="Ribosomal_uS2_CS"/>
</dbReference>
<dbReference type="InterPro" id="IPR023591">
    <property type="entry name" value="Ribosomal_uS2_flav_dom_sf"/>
</dbReference>
<dbReference type="NCBIfam" id="TIGR01011">
    <property type="entry name" value="rpsB_bact"/>
    <property type="match status" value="1"/>
</dbReference>
<dbReference type="PANTHER" id="PTHR12534">
    <property type="entry name" value="30S RIBOSOMAL PROTEIN S2 PROKARYOTIC AND ORGANELLAR"/>
    <property type="match status" value="1"/>
</dbReference>
<dbReference type="PANTHER" id="PTHR12534:SF0">
    <property type="entry name" value="SMALL RIBOSOMAL SUBUNIT PROTEIN US2M"/>
    <property type="match status" value="1"/>
</dbReference>
<dbReference type="Pfam" id="PF00318">
    <property type="entry name" value="Ribosomal_S2"/>
    <property type="match status" value="1"/>
</dbReference>
<dbReference type="PRINTS" id="PR00395">
    <property type="entry name" value="RIBOSOMALS2"/>
</dbReference>
<dbReference type="SUPFAM" id="SSF52313">
    <property type="entry name" value="Ribosomal protein S2"/>
    <property type="match status" value="1"/>
</dbReference>
<dbReference type="PROSITE" id="PS00962">
    <property type="entry name" value="RIBOSOMAL_S2_1"/>
    <property type="match status" value="1"/>
</dbReference>
<dbReference type="PROSITE" id="PS00963">
    <property type="entry name" value="RIBOSOMAL_S2_2"/>
    <property type="match status" value="1"/>
</dbReference>
<evidence type="ECO:0000255" key="1">
    <source>
        <dbReference type="HAMAP-Rule" id="MF_00291"/>
    </source>
</evidence>
<evidence type="ECO:0000256" key="2">
    <source>
        <dbReference type="SAM" id="MobiDB-lite"/>
    </source>
</evidence>
<evidence type="ECO:0000305" key="3"/>
<feature type="chain" id="PRO_0000134147" description="Small ribosomal subunit protein uS2">
    <location>
        <begin position="1"/>
        <end position="263"/>
    </location>
</feature>
<feature type="region of interest" description="Disordered" evidence="2">
    <location>
        <begin position="230"/>
        <end position="263"/>
    </location>
</feature>
<feature type="compositionally biased region" description="Basic and acidic residues" evidence="2">
    <location>
        <begin position="230"/>
        <end position="249"/>
    </location>
</feature>
<feature type="compositionally biased region" description="Acidic residues" evidence="2">
    <location>
        <begin position="250"/>
        <end position="263"/>
    </location>
</feature>
<organism>
    <name type="scientific">Campylobacter jejuni subsp. jejuni serotype O:2 (strain ATCC 700819 / NCTC 11168)</name>
    <dbReference type="NCBI Taxonomy" id="192222"/>
    <lineage>
        <taxon>Bacteria</taxon>
        <taxon>Pseudomonadati</taxon>
        <taxon>Campylobacterota</taxon>
        <taxon>Epsilonproteobacteria</taxon>
        <taxon>Campylobacterales</taxon>
        <taxon>Campylobacteraceae</taxon>
        <taxon>Campylobacter</taxon>
    </lineage>
</organism>
<sequence>MVSMRDLLECGVHFGHQTRRWNPKMKKFIFGERKGIYVIDLQKTLRYFRYTYNIVRDAAAEGKTILFVGTKKQAGGAIKEYAEKCGMPYVNHRWLGGMMTNFGTIRQSIRKLEVIEKMEEDGSIKLLTKKEALMLTRKKEKLLAYLGGIRYMKTQPDMIFVIDTVKEKIAVQEANRLRIPVVAPLDTNCDPDLVTYPIPGNDDAIRSVQLFCQEMAEAINEGKALREQDGEALVNEEKEITDEEKKEVLDEAMSEEDFGEEQE</sequence>
<reference key="1">
    <citation type="journal article" date="2000" name="Nature">
        <title>The genome sequence of the food-borne pathogen Campylobacter jejuni reveals hypervariable sequences.</title>
        <authorList>
            <person name="Parkhill J."/>
            <person name="Wren B.W."/>
            <person name="Mungall K.L."/>
            <person name="Ketley J.M."/>
            <person name="Churcher C.M."/>
            <person name="Basham D."/>
            <person name="Chillingworth T."/>
            <person name="Davies R.M."/>
            <person name="Feltwell T."/>
            <person name="Holroyd S."/>
            <person name="Jagels K."/>
            <person name="Karlyshev A.V."/>
            <person name="Moule S."/>
            <person name="Pallen M.J."/>
            <person name="Penn C.W."/>
            <person name="Quail M.A."/>
            <person name="Rajandream M.A."/>
            <person name="Rutherford K.M."/>
            <person name="van Vliet A.H.M."/>
            <person name="Whitehead S."/>
            <person name="Barrell B.G."/>
        </authorList>
    </citation>
    <scope>NUCLEOTIDE SEQUENCE [LARGE SCALE GENOMIC DNA]</scope>
    <source>
        <strain>ATCC 700819 / NCTC 11168</strain>
    </source>
</reference>